<evidence type="ECO:0000250" key="1"/>
<evidence type="ECO:0000256" key="2">
    <source>
        <dbReference type="SAM" id="MobiDB-lite"/>
    </source>
</evidence>
<evidence type="ECO:0000305" key="3"/>
<organism>
    <name type="scientific">Fusarium vanettenii (strain ATCC MYA-4622 / CBS 123669 / FGSC 9596 / NRRL 45880 / 77-13-4)</name>
    <name type="common">Fusarium solani subsp. pisi</name>
    <dbReference type="NCBI Taxonomy" id="660122"/>
    <lineage>
        <taxon>Eukaryota</taxon>
        <taxon>Fungi</taxon>
        <taxon>Dikarya</taxon>
        <taxon>Ascomycota</taxon>
        <taxon>Pezizomycotina</taxon>
        <taxon>Sordariomycetes</taxon>
        <taxon>Hypocreomycetidae</taxon>
        <taxon>Hypocreales</taxon>
        <taxon>Nectriaceae</taxon>
        <taxon>Fusarium</taxon>
        <taxon>Fusarium solani species complex</taxon>
        <taxon>Fusarium vanettenii</taxon>
    </lineage>
</organism>
<protein>
    <recommendedName>
        <fullName>Tethering factor for nuclear proteasome STS1</fullName>
    </recommendedName>
</protein>
<keyword id="KW-0963">Cytoplasm</keyword>
<keyword id="KW-0539">Nucleus</keyword>
<keyword id="KW-0653">Protein transport</keyword>
<keyword id="KW-1185">Reference proteome</keyword>
<keyword id="KW-0813">Transport</keyword>
<accession>C7YRR5</accession>
<reference key="1">
    <citation type="journal article" date="2009" name="PLoS Genet.">
        <title>The genome of Nectria haematococca: contribution of supernumerary chromosomes to gene expansion.</title>
        <authorList>
            <person name="Coleman J.J."/>
            <person name="Rounsley S.D."/>
            <person name="Rodriguez-Carres M."/>
            <person name="Kuo A."/>
            <person name="Wasmann C.C."/>
            <person name="Grimwood J."/>
            <person name="Schmutz J."/>
            <person name="Taga M."/>
            <person name="White G.J."/>
            <person name="Zhou S."/>
            <person name="Schwartz D.C."/>
            <person name="Freitag M."/>
            <person name="Ma L.-J."/>
            <person name="Danchin E.G.J."/>
            <person name="Henrissat B."/>
            <person name="Coutinho P.M."/>
            <person name="Nelson D.R."/>
            <person name="Straney D."/>
            <person name="Napoli C.A."/>
            <person name="Barker B.M."/>
            <person name="Gribskov M."/>
            <person name="Rep M."/>
            <person name="Kroken S."/>
            <person name="Molnar I."/>
            <person name="Rensing C."/>
            <person name="Kennell J.C."/>
            <person name="Zamora J."/>
            <person name="Farman M.L."/>
            <person name="Selker E.U."/>
            <person name="Salamov A."/>
            <person name="Shapiro H."/>
            <person name="Pangilinan J."/>
            <person name="Lindquist E."/>
            <person name="Lamers C."/>
            <person name="Grigoriev I.V."/>
            <person name="Geiser D.M."/>
            <person name="Covert S.F."/>
            <person name="Temporini E."/>
            <person name="VanEtten H.D."/>
        </authorList>
    </citation>
    <scope>NUCLEOTIDE SEQUENCE [LARGE SCALE GENOMIC DNA]</scope>
    <source>
        <strain>ATCC MYA-4622 / CBS 123669 / FGSC 9596 / NRRL 45880 / 77-13-4</strain>
    </source>
</reference>
<feature type="chain" id="PRO_0000409417" description="Tethering factor for nuclear proteasome STS1">
    <location>
        <begin position="1"/>
        <end position="296"/>
    </location>
</feature>
<feature type="region of interest" description="Disordered" evidence="2">
    <location>
        <begin position="1"/>
        <end position="64"/>
    </location>
</feature>
<feature type="compositionally biased region" description="Low complexity" evidence="2">
    <location>
        <begin position="49"/>
        <end position="60"/>
    </location>
</feature>
<dbReference type="EMBL" id="GG698899">
    <property type="protein sequence ID" value="EEU45508.1"/>
    <property type="molecule type" value="Genomic_DNA"/>
</dbReference>
<dbReference type="RefSeq" id="XP_003051221.1">
    <property type="nucleotide sequence ID" value="XM_003051175.1"/>
</dbReference>
<dbReference type="SMR" id="C7YRR5"/>
<dbReference type="FunCoup" id="C7YRR5">
    <property type="interactions" value="12"/>
</dbReference>
<dbReference type="STRING" id="660122.C7YRR5"/>
<dbReference type="EnsemblFungi" id="NechaT100572">
    <property type="protein sequence ID" value="NechaP100572"/>
    <property type="gene ID" value="NechaG100572"/>
</dbReference>
<dbReference type="GeneID" id="9667992"/>
<dbReference type="KEGG" id="nhe:NECHADRAFT_100572"/>
<dbReference type="VEuPathDB" id="FungiDB:NECHADRAFT_100572"/>
<dbReference type="eggNOG" id="ENOG502RNK4">
    <property type="taxonomic scope" value="Eukaryota"/>
</dbReference>
<dbReference type="HOGENOM" id="CLU_033658_0_0_1"/>
<dbReference type="InParanoid" id="C7YRR5"/>
<dbReference type="OMA" id="DYTPHFL"/>
<dbReference type="OrthoDB" id="10061064at2759"/>
<dbReference type="Proteomes" id="UP000005206">
    <property type="component" value="Unassembled WGS sequence"/>
</dbReference>
<dbReference type="GO" id="GO:0005737">
    <property type="term" value="C:cytoplasm"/>
    <property type="evidence" value="ECO:0007669"/>
    <property type="project" value="UniProtKB-SubCell"/>
</dbReference>
<dbReference type="GO" id="GO:0031965">
    <property type="term" value="C:nuclear membrane"/>
    <property type="evidence" value="ECO:0007669"/>
    <property type="project" value="TreeGrafter"/>
</dbReference>
<dbReference type="GO" id="GO:0070628">
    <property type="term" value="F:proteasome binding"/>
    <property type="evidence" value="ECO:0007669"/>
    <property type="project" value="TreeGrafter"/>
</dbReference>
<dbReference type="GO" id="GO:0071630">
    <property type="term" value="P:nuclear protein quality control by the ubiquitin-proteasome system"/>
    <property type="evidence" value="ECO:0007669"/>
    <property type="project" value="InterPro"/>
</dbReference>
<dbReference type="GO" id="GO:0031144">
    <property type="term" value="P:proteasome localization"/>
    <property type="evidence" value="ECO:0007669"/>
    <property type="project" value="InterPro"/>
</dbReference>
<dbReference type="GO" id="GO:0015031">
    <property type="term" value="P:protein transport"/>
    <property type="evidence" value="ECO:0007669"/>
    <property type="project" value="UniProtKB-KW"/>
</dbReference>
<dbReference type="FunFam" id="1.20.58.1590:FF:000001">
    <property type="entry name" value="Tethering factor for nuclear proteasome STS1"/>
    <property type="match status" value="1"/>
</dbReference>
<dbReference type="Gene3D" id="1.20.58.1590">
    <property type="entry name" value="Tethering factor for nuclear proteasome Cut8/Sts1"/>
    <property type="match status" value="1"/>
</dbReference>
<dbReference type="InterPro" id="IPR013868">
    <property type="entry name" value="Cut8/Sts1_fam"/>
</dbReference>
<dbReference type="InterPro" id="IPR038422">
    <property type="entry name" value="Cut8/Sts1_sf"/>
</dbReference>
<dbReference type="PANTHER" id="PTHR28032">
    <property type="entry name" value="FI02826P"/>
    <property type="match status" value="1"/>
</dbReference>
<dbReference type="PANTHER" id="PTHR28032:SF1">
    <property type="entry name" value="FI02826P"/>
    <property type="match status" value="1"/>
</dbReference>
<dbReference type="Pfam" id="PF08559">
    <property type="entry name" value="Cut8"/>
    <property type="match status" value="1"/>
</dbReference>
<comment type="function">
    <text evidence="1">Involved in ubiquitin-mediated protein degradation. Regulatory factor in the ubiquitin/proteasome pathway that controls the turnover of proteasome substrates. Targets proteasomes to the nucleus and facilitates the degradation of nuclear proteins (By similarity).</text>
</comment>
<comment type="subunit">
    <text evidence="1">Binds the proteasome.</text>
</comment>
<comment type="subcellular location">
    <subcellularLocation>
        <location evidence="1">Cytoplasm</location>
    </subcellularLocation>
    <subcellularLocation>
        <location evidence="1">Nucleus</location>
    </subcellularLocation>
</comment>
<comment type="similarity">
    <text evidence="3">Belongs to the cut8/STS1 family.</text>
</comment>
<sequence length="296" mass="32729">MNVLLSPQPPVFPHQHENHHLSPQRSLSPFHNMATRKRKADEDGDETMSPRSSPTISSRPLARPSKKIRANEVIGRPLALPRLLETLDTAQLRTVLERICERHPDIGHEVETGAPRPSVSSVVVVLQGYMEKLSNAVPYGETSPEYTYYRVKEPLVALIDALSDFTPQFLPPNETQPTKSLEFLNEATNIIHKLPDWEPQTYRHHKENAYEEISKAWALVINEAGKRAGGINLHSGGWDQILSRHNEQSGGRLAYAISAMTTSVGWLDPSTSSGPAGASDPNSILNQLMSGIMGLA</sequence>
<proteinExistence type="inferred from homology"/>
<name>STS1_FUSV7</name>
<gene>
    <name type="primary">STS1</name>
    <name type="ORF">NECHADRAFT_100572</name>
</gene>